<reference key="1">
    <citation type="journal article" date="2001" name="Science">
        <title>Comparative genomics of Listeria species.</title>
        <authorList>
            <person name="Glaser P."/>
            <person name="Frangeul L."/>
            <person name="Buchrieser C."/>
            <person name="Rusniok C."/>
            <person name="Amend A."/>
            <person name="Baquero F."/>
            <person name="Berche P."/>
            <person name="Bloecker H."/>
            <person name="Brandt P."/>
            <person name="Chakraborty T."/>
            <person name="Charbit A."/>
            <person name="Chetouani F."/>
            <person name="Couve E."/>
            <person name="de Daruvar A."/>
            <person name="Dehoux P."/>
            <person name="Domann E."/>
            <person name="Dominguez-Bernal G."/>
            <person name="Duchaud E."/>
            <person name="Durant L."/>
            <person name="Dussurget O."/>
            <person name="Entian K.-D."/>
            <person name="Fsihi H."/>
            <person name="Garcia-del Portillo F."/>
            <person name="Garrido P."/>
            <person name="Gautier L."/>
            <person name="Goebel W."/>
            <person name="Gomez-Lopez N."/>
            <person name="Hain T."/>
            <person name="Hauf J."/>
            <person name="Jackson D."/>
            <person name="Jones L.-M."/>
            <person name="Kaerst U."/>
            <person name="Kreft J."/>
            <person name="Kuhn M."/>
            <person name="Kunst F."/>
            <person name="Kurapkat G."/>
            <person name="Madueno E."/>
            <person name="Maitournam A."/>
            <person name="Mata Vicente J."/>
            <person name="Ng E."/>
            <person name="Nedjari H."/>
            <person name="Nordsiek G."/>
            <person name="Novella S."/>
            <person name="de Pablos B."/>
            <person name="Perez-Diaz J.-C."/>
            <person name="Purcell R."/>
            <person name="Remmel B."/>
            <person name="Rose M."/>
            <person name="Schlueter T."/>
            <person name="Simoes N."/>
            <person name="Tierrez A."/>
            <person name="Vazquez-Boland J.-A."/>
            <person name="Voss H."/>
            <person name="Wehland J."/>
            <person name="Cossart P."/>
        </authorList>
    </citation>
    <scope>NUCLEOTIDE SEQUENCE [LARGE SCALE GENOMIC DNA]</scope>
    <source>
        <strain>ATCC BAA-679 / EGD-e</strain>
    </source>
</reference>
<proteinExistence type="inferred from homology"/>
<keyword id="KW-0963">Cytoplasm</keyword>
<keyword id="KW-0489">Methyltransferase</keyword>
<keyword id="KW-1185">Reference proteome</keyword>
<keyword id="KW-0698">rRNA processing</keyword>
<keyword id="KW-0949">S-adenosyl-L-methionine</keyword>
<keyword id="KW-0808">Transferase</keyword>
<name>RLMH_LISMO</name>
<protein>
    <recommendedName>
        <fullName evidence="1">Ribosomal RNA large subunit methyltransferase H</fullName>
        <ecNumber evidence="1">2.1.1.177</ecNumber>
    </recommendedName>
    <alternativeName>
        <fullName evidence="1">23S rRNA (pseudouridine1915-N3)-methyltransferase</fullName>
    </alternativeName>
    <alternativeName>
        <fullName evidence="1">23S rRNA m3Psi1915 methyltransferase</fullName>
    </alternativeName>
    <alternativeName>
        <fullName evidence="1">rRNA (pseudouridine-N3-)-methyltransferase RlmH</fullName>
    </alternativeName>
</protein>
<sequence>MNIQIVTVGKLKEKYLVQGIAEYLKRLSAYAKVTIVEVPDEKAPEVLSDAEMKQVKDKEGARILAKIPDDAYVIALAIDGKMKSSEEFAADLDKLATYGKSKVTFVIGGSLGLSEAVLKRSNERISFGRLTLPHQLMRLVLVEQVYRAFRIVRGEPYHK</sequence>
<feature type="chain" id="PRO_0000198140" description="Ribosomal RNA large subunit methyltransferase H">
    <location>
        <begin position="1"/>
        <end position="159"/>
    </location>
</feature>
<feature type="binding site" evidence="1">
    <location>
        <position position="76"/>
    </location>
    <ligand>
        <name>S-adenosyl-L-methionine</name>
        <dbReference type="ChEBI" id="CHEBI:59789"/>
    </ligand>
</feature>
<feature type="binding site" evidence="1">
    <location>
        <position position="108"/>
    </location>
    <ligand>
        <name>S-adenosyl-L-methionine</name>
        <dbReference type="ChEBI" id="CHEBI:59789"/>
    </ligand>
</feature>
<feature type="binding site" evidence="1">
    <location>
        <begin position="127"/>
        <end position="132"/>
    </location>
    <ligand>
        <name>S-adenosyl-L-methionine</name>
        <dbReference type="ChEBI" id="CHEBI:59789"/>
    </ligand>
</feature>
<gene>
    <name evidence="1" type="primary">rlmH</name>
    <name type="ordered locus">lmo0293</name>
</gene>
<evidence type="ECO:0000255" key="1">
    <source>
        <dbReference type="HAMAP-Rule" id="MF_00658"/>
    </source>
</evidence>
<comment type="function">
    <text evidence="1">Specifically methylates the pseudouridine at position 1915 (m3Psi1915) in 23S rRNA.</text>
</comment>
<comment type="catalytic activity">
    <reaction evidence="1">
        <text>pseudouridine(1915) in 23S rRNA + S-adenosyl-L-methionine = N(3)-methylpseudouridine(1915) in 23S rRNA + S-adenosyl-L-homocysteine + H(+)</text>
        <dbReference type="Rhea" id="RHEA:42752"/>
        <dbReference type="Rhea" id="RHEA-COMP:10221"/>
        <dbReference type="Rhea" id="RHEA-COMP:10222"/>
        <dbReference type="ChEBI" id="CHEBI:15378"/>
        <dbReference type="ChEBI" id="CHEBI:57856"/>
        <dbReference type="ChEBI" id="CHEBI:59789"/>
        <dbReference type="ChEBI" id="CHEBI:65314"/>
        <dbReference type="ChEBI" id="CHEBI:74486"/>
        <dbReference type="EC" id="2.1.1.177"/>
    </reaction>
</comment>
<comment type="subunit">
    <text evidence="1">Homodimer.</text>
</comment>
<comment type="subcellular location">
    <subcellularLocation>
        <location evidence="1">Cytoplasm</location>
    </subcellularLocation>
</comment>
<comment type="similarity">
    <text evidence="1">Belongs to the RNA methyltransferase RlmH family.</text>
</comment>
<organism>
    <name type="scientific">Listeria monocytogenes serovar 1/2a (strain ATCC BAA-679 / EGD-e)</name>
    <dbReference type="NCBI Taxonomy" id="169963"/>
    <lineage>
        <taxon>Bacteria</taxon>
        <taxon>Bacillati</taxon>
        <taxon>Bacillota</taxon>
        <taxon>Bacilli</taxon>
        <taxon>Bacillales</taxon>
        <taxon>Listeriaceae</taxon>
        <taxon>Listeria</taxon>
    </lineage>
</organism>
<dbReference type="EC" id="2.1.1.177" evidence="1"/>
<dbReference type="EMBL" id="AL591974">
    <property type="protein sequence ID" value="CAD00820.1"/>
    <property type="molecule type" value="Genomic_DNA"/>
</dbReference>
<dbReference type="PIR" id="AF1111">
    <property type="entry name" value="AF1111"/>
</dbReference>
<dbReference type="RefSeq" id="NP_463824.1">
    <property type="nucleotide sequence ID" value="NC_003210.1"/>
</dbReference>
<dbReference type="RefSeq" id="WP_010989404.1">
    <property type="nucleotide sequence ID" value="NC_003210.1"/>
</dbReference>
<dbReference type="SMR" id="Q8YA66"/>
<dbReference type="STRING" id="169963.gene:17592944"/>
<dbReference type="PaxDb" id="169963-lmo0293"/>
<dbReference type="EnsemblBacteria" id="CAD00820">
    <property type="protein sequence ID" value="CAD00820"/>
    <property type="gene ID" value="CAD00820"/>
</dbReference>
<dbReference type="GeneID" id="987456"/>
<dbReference type="KEGG" id="lmo:lmo0293"/>
<dbReference type="PATRIC" id="fig|169963.11.peg.302"/>
<dbReference type="eggNOG" id="COG1576">
    <property type="taxonomic scope" value="Bacteria"/>
</dbReference>
<dbReference type="HOGENOM" id="CLU_100552_0_0_9"/>
<dbReference type="OrthoDB" id="9806643at2"/>
<dbReference type="PhylomeDB" id="Q8YA66"/>
<dbReference type="BioCyc" id="LMON169963:LMO0293-MONOMER"/>
<dbReference type="Proteomes" id="UP000000817">
    <property type="component" value="Chromosome"/>
</dbReference>
<dbReference type="GO" id="GO:0005737">
    <property type="term" value="C:cytoplasm"/>
    <property type="evidence" value="ECO:0007669"/>
    <property type="project" value="UniProtKB-SubCell"/>
</dbReference>
<dbReference type="GO" id="GO:0070038">
    <property type="term" value="F:rRNA (pseudouridine-N3-)-methyltransferase activity"/>
    <property type="evidence" value="ECO:0007669"/>
    <property type="project" value="UniProtKB-UniRule"/>
</dbReference>
<dbReference type="CDD" id="cd18081">
    <property type="entry name" value="RlmH-like"/>
    <property type="match status" value="1"/>
</dbReference>
<dbReference type="Gene3D" id="3.40.1280.10">
    <property type="match status" value="1"/>
</dbReference>
<dbReference type="HAMAP" id="MF_00658">
    <property type="entry name" value="23SrRNA_methyltr_H"/>
    <property type="match status" value="1"/>
</dbReference>
<dbReference type="InterPro" id="IPR029028">
    <property type="entry name" value="Alpha/beta_knot_MTases"/>
</dbReference>
<dbReference type="InterPro" id="IPR003742">
    <property type="entry name" value="RlmH-like"/>
</dbReference>
<dbReference type="InterPro" id="IPR029026">
    <property type="entry name" value="tRNA_m1G_MTases_N"/>
</dbReference>
<dbReference type="NCBIfam" id="NF000985">
    <property type="entry name" value="PRK00103.1-3"/>
    <property type="match status" value="1"/>
</dbReference>
<dbReference type="NCBIfam" id="TIGR00246">
    <property type="entry name" value="tRNA_RlmH_YbeA"/>
    <property type="match status" value="1"/>
</dbReference>
<dbReference type="PANTHER" id="PTHR33603">
    <property type="entry name" value="METHYLTRANSFERASE"/>
    <property type="match status" value="1"/>
</dbReference>
<dbReference type="PANTHER" id="PTHR33603:SF1">
    <property type="entry name" value="RIBOSOMAL RNA LARGE SUBUNIT METHYLTRANSFERASE H"/>
    <property type="match status" value="1"/>
</dbReference>
<dbReference type="Pfam" id="PF02590">
    <property type="entry name" value="SPOUT_MTase"/>
    <property type="match status" value="1"/>
</dbReference>
<dbReference type="PIRSF" id="PIRSF004505">
    <property type="entry name" value="MT_bac"/>
    <property type="match status" value="1"/>
</dbReference>
<dbReference type="SUPFAM" id="SSF75217">
    <property type="entry name" value="alpha/beta knot"/>
    <property type="match status" value="1"/>
</dbReference>
<accession>Q8YA66</accession>